<protein>
    <recommendedName>
        <fullName evidence="1">Methionine--tRNA ligase</fullName>
        <ecNumber evidence="1">6.1.1.10</ecNumber>
    </recommendedName>
    <alternativeName>
        <fullName evidence="1">Methionyl-tRNA synthetase</fullName>
        <shortName evidence="1">MetRS</shortName>
    </alternativeName>
</protein>
<accession>Q8D8F2</accession>
<sequence length="690" mass="78120">MANDPRNFPQRKLLVTCALPYANGSIHLGHMLEHIQADIWVRYQRLRGNIVNFICADDAHGTPIMLKAQQMGMSPEEMIAAVSIEHQKDFAGFDISFDNYHSTHSDENRELASHIYLQLKKNGFISSRTISQLFDPEKEMFLPDRFVKGTCPKCKSEDQYGDNCDACGETYSPTELINPKSAVSGATPVMKDSEHFFFDLPQFESMLKEWTRSGSLQTETANKMQEWFESGLQQWDISRDAPYFGFEIPGEKDKFFYVWLDAPIGYMGSFKNLCDKRDDLDFDEYWNKDSKTELYHFIGKDIVYFHSLFWPAMLDGSGFRKPNNVFVHGYVTVNGAKMSKSKGTFVKASTYLEHLDPECLRYYYAAKLNSRIDDLDLNLEDFTQRVNADVVNKIVNLASRNAGFIAKRFEGKLAENFVEPELYNEFVAAADRIAELYEAREFGRAIRELTALADKANQYVDEKAPWVVAKQEGKDQELQEICSVGINLFRVLMTYLKPVMPALAARTEAFLNEELTWEGVAQPLTAHEITAFKALFNRIDPKNIEAMIEASKEDAAAEMAAKEKAEASNAAQETELSKDPIAEEIEFDDFAKVDLRIAKIVSCESVPKADKLLKFQLDIGGEMRQVFSGIKAAYNPEDLVGKYTVVVANLKPRKMKFGMSEGMILAAGPGGKDLWILEPHEGAQPGMRVM</sequence>
<comment type="function">
    <text evidence="1">Is required not only for elongation of protein synthesis but also for the initiation of all mRNA translation through initiator tRNA(fMet) aminoacylation.</text>
</comment>
<comment type="catalytic activity">
    <reaction evidence="1">
        <text>tRNA(Met) + L-methionine + ATP = L-methionyl-tRNA(Met) + AMP + diphosphate</text>
        <dbReference type="Rhea" id="RHEA:13481"/>
        <dbReference type="Rhea" id="RHEA-COMP:9667"/>
        <dbReference type="Rhea" id="RHEA-COMP:9698"/>
        <dbReference type="ChEBI" id="CHEBI:30616"/>
        <dbReference type="ChEBI" id="CHEBI:33019"/>
        <dbReference type="ChEBI" id="CHEBI:57844"/>
        <dbReference type="ChEBI" id="CHEBI:78442"/>
        <dbReference type="ChEBI" id="CHEBI:78530"/>
        <dbReference type="ChEBI" id="CHEBI:456215"/>
        <dbReference type="EC" id="6.1.1.10"/>
    </reaction>
</comment>
<comment type="cofactor">
    <cofactor evidence="1">
        <name>Zn(2+)</name>
        <dbReference type="ChEBI" id="CHEBI:29105"/>
    </cofactor>
    <text evidence="1">Binds 1 zinc ion per subunit.</text>
</comment>
<comment type="subunit">
    <text evidence="1">Homodimer.</text>
</comment>
<comment type="subcellular location">
    <subcellularLocation>
        <location evidence="1">Cytoplasm</location>
    </subcellularLocation>
</comment>
<comment type="similarity">
    <text evidence="1">Belongs to the class-I aminoacyl-tRNA synthetase family. MetG type 1 subfamily.</text>
</comment>
<evidence type="ECO:0000255" key="1">
    <source>
        <dbReference type="HAMAP-Rule" id="MF_00098"/>
    </source>
</evidence>
<dbReference type="EC" id="6.1.1.10" evidence="1"/>
<dbReference type="EMBL" id="AE016795">
    <property type="protein sequence ID" value="AAO11352.2"/>
    <property type="molecule type" value="Genomic_DNA"/>
</dbReference>
<dbReference type="RefSeq" id="WP_011080834.1">
    <property type="nucleotide sequence ID" value="NC_004459.3"/>
</dbReference>
<dbReference type="SMR" id="Q8D8F2"/>
<dbReference type="KEGG" id="vvu:VV1_3028"/>
<dbReference type="HOGENOM" id="CLU_009710_7_0_6"/>
<dbReference type="Proteomes" id="UP000002275">
    <property type="component" value="Chromosome 1"/>
</dbReference>
<dbReference type="GO" id="GO:0005829">
    <property type="term" value="C:cytosol"/>
    <property type="evidence" value="ECO:0007669"/>
    <property type="project" value="TreeGrafter"/>
</dbReference>
<dbReference type="GO" id="GO:0005524">
    <property type="term" value="F:ATP binding"/>
    <property type="evidence" value="ECO:0007669"/>
    <property type="project" value="UniProtKB-UniRule"/>
</dbReference>
<dbReference type="GO" id="GO:0046872">
    <property type="term" value="F:metal ion binding"/>
    <property type="evidence" value="ECO:0007669"/>
    <property type="project" value="UniProtKB-KW"/>
</dbReference>
<dbReference type="GO" id="GO:0004825">
    <property type="term" value="F:methionine-tRNA ligase activity"/>
    <property type="evidence" value="ECO:0007669"/>
    <property type="project" value="UniProtKB-UniRule"/>
</dbReference>
<dbReference type="GO" id="GO:0000049">
    <property type="term" value="F:tRNA binding"/>
    <property type="evidence" value="ECO:0007669"/>
    <property type="project" value="UniProtKB-KW"/>
</dbReference>
<dbReference type="GO" id="GO:0006431">
    <property type="term" value="P:methionyl-tRNA aminoacylation"/>
    <property type="evidence" value="ECO:0007669"/>
    <property type="project" value="UniProtKB-UniRule"/>
</dbReference>
<dbReference type="CDD" id="cd07957">
    <property type="entry name" value="Anticodon_Ia_Met"/>
    <property type="match status" value="1"/>
</dbReference>
<dbReference type="CDD" id="cd00814">
    <property type="entry name" value="MetRS_core"/>
    <property type="match status" value="1"/>
</dbReference>
<dbReference type="CDD" id="cd02800">
    <property type="entry name" value="tRNA_bind_EcMetRS_like"/>
    <property type="match status" value="1"/>
</dbReference>
<dbReference type="FunFam" id="1.10.730.10:FF:000005">
    <property type="entry name" value="Methionine--tRNA ligase"/>
    <property type="match status" value="1"/>
</dbReference>
<dbReference type="FunFam" id="2.20.28.20:FF:000001">
    <property type="entry name" value="Methionine--tRNA ligase"/>
    <property type="match status" value="1"/>
</dbReference>
<dbReference type="FunFam" id="2.40.50.140:FF:000042">
    <property type="entry name" value="Methionine--tRNA ligase"/>
    <property type="match status" value="1"/>
</dbReference>
<dbReference type="Gene3D" id="3.40.50.620">
    <property type="entry name" value="HUPs"/>
    <property type="match status" value="1"/>
</dbReference>
<dbReference type="Gene3D" id="1.10.730.10">
    <property type="entry name" value="Isoleucyl-tRNA Synthetase, Domain 1"/>
    <property type="match status" value="1"/>
</dbReference>
<dbReference type="Gene3D" id="2.20.28.20">
    <property type="entry name" value="Methionyl-tRNA synthetase, Zn-domain"/>
    <property type="match status" value="1"/>
</dbReference>
<dbReference type="Gene3D" id="2.40.50.140">
    <property type="entry name" value="Nucleic acid-binding proteins"/>
    <property type="match status" value="1"/>
</dbReference>
<dbReference type="HAMAP" id="MF_00098">
    <property type="entry name" value="Met_tRNA_synth_type1"/>
    <property type="match status" value="1"/>
</dbReference>
<dbReference type="InterPro" id="IPR001412">
    <property type="entry name" value="aa-tRNA-synth_I_CS"/>
</dbReference>
<dbReference type="InterPro" id="IPR041872">
    <property type="entry name" value="Anticodon_Met"/>
</dbReference>
<dbReference type="InterPro" id="IPR004495">
    <property type="entry name" value="Met-tRNA-synth_bsu_C"/>
</dbReference>
<dbReference type="InterPro" id="IPR023458">
    <property type="entry name" value="Met-tRNA_ligase_1"/>
</dbReference>
<dbReference type="InterPro" id="IPR014758">
    <property type="entry name" value="Met-tRNA_synth"/>
</dbReference>
<dbReference type="InterPro" id="IPR015413">
    <property type="entry name" value="Methionyl/Leucyl_tRNA_Synth"/>
</dbReference>
<dbReference type="InterPro" id="IPR033911">
    <property type="entry name" value="MetRS_core"/>
</dbReference>
<dbReference type="InterPro" id="IPR029038">
    <property type="entry name" value="MetRS_Zn"/>
</dbReference>
<dbReference type="InterPro" id="IPR012340">
    <property type="entry name" value="NA-bd_OB-fold"/>
</dbReference>
<dbReference type="InterPro" id="IPR014729">
    <property type="entry name" value="Rossmann-like_a/b/a_fold"/>
</dbReference>
<dbReference type="InterPro" id="IPR002547">
    <property type="entry name" value="tRNA-bd_dom"/>
</dbReference>
<dbReference type="InterPro" id="IPR009080">
    <property type="entry name" value="tRNAsynth_Ia_anticodon-bd"/>
</dbReference>
<dbReference type="NCBIfam" id="TIGR00398">
    <property type="entry name" value="metG"/>
    <property type="match status" value="1"/>
</dbReference>
<dbReference type="NCBIfam" id="TIGR00399">
    <property type="entry name" value="metG_C_term"/>
    <property type="match status" value="1"/>
</dbReference>
<dbReference type="NCBIfam" id="NF001100">
    <property type="entry name" value="PRK00133.1"/>
    <property type="match status" value="1"/>
</dbReference>
<dbReference type="PANTHER" id="PTHR45765">
    <property type="entry name" value="METHIONINE--TRNA LIGASE"/>
    <property type="match status" value="1"/>
</dbReference>
<dbReference type="PANTHER" id="PTHR45765:SF1">
    <property type="entry name" value="METHIONINE--TRNA LIGASE, CYTOPLASMIC"/>
    <property type="match status" value="1"/>
</dbReference>
<dbReference type="Pfam" id="PF19303">
    <property type="entry name" value="Anticodon_3"/>
    <property type="match status" value="1"/>
</dbReference>
<dbReference type="Pfam" id="PF09334">
    <property type="entry name" value="tRNA-synt_1g"/>
    <property type="match status" value="1"/>
</dbReference>
<dbReference type="Pfam" id="PF01588">
    <property type="entry name" value="tRNA_bind"/>
    <property type="match status" value="1"/>
</dbReference>
<dbReference type="PRINTS" id="PR01041">
    <property type="entry name" value="TRNASYNTHMET"/>
</dbReference>
<dbReference type="SUPFAM" id="SSF47323">
    <property type="entry name" value="Anticodon-binding domain of a subclass of class I aminoacyl-tRNA synthetases"/>
    <property type="match status" value="1"/>
</dbReference>
<dbReference type="SUPFAM" id="SSF57770">
    <property type="entry name" value="Methionyl-tRNA synthetase (MetRS), Zn-domain"/>
    <property type="match status" value="1"/>
</dbReference>
<dbReference type="SUPFAM" id="SSF50249">
    <property type="entry name" value="Nucleic acid-binding proteins"/>
    <property type="match status" value="1"/>
</dbReference>
<dbReference type="SUPFAM" id="SSF52374">
    <property type="entry name" value="Nucleotidylyl transferase"/>
    <property type="match status" value="1"/>
</dbReference>
<dbReference type="PROSITE" id="PS00178">
    <property type="entry name" value="AA_TRNA_LIGASE_I"/>
    <property type="match status" value="1"/>
</dbReference>
<dbReference type="PROSITE" id="PS50886">
    <property type="entry name" value="TRBD"/>
    <property type="match status" value="1"/>
</dbReference>
<keyword id="KW-0030">Aminoacyl-tRNA synthetase</keyword>
<keyword id="KW-0067">ATP-binding</keyword>
<keyword id="KW-0963">Cytoplasm</keyword>
<keyword id="KW-0436">Ligase</keyword>
<keyword id="KW-0479">Metal-binding</keyword>
<keyword id="KW-0547">Nucleotide-binding</keyword>
<keyword id="KW-0648">Protein biosynthesis</keyword>
<keyword id="KW-0694">RNA-binding</keyword>
<keyword id="KW-0820">tRNA-binding</keyword>
<keyword id="KW-0862">Zinc</keyword>
<reference key="1">
    <citation type="submission" date="2002-12" db="EMBL/GenBank/DDBJ databases">
        <title>Complete genome sequence of Vibrio vulnificus CMCP6.</title>
        <authorList>
            <person name="Rhee J.H."/>
            <person name="Kim S.Y."/>
            <person name="Chung S.S."/>
            <person name="Kim J.J."/>
            <person name="Moon Y.H."/>
            <person name="Jeong H."/>
            <person name="Choy H.E."/>
        </authorList>
    </citation>
    <scope>NUCLEOTIDE SEQUENCE [LARGE SCALE GENOMIC DNA]</scope>
    <source>
        <strain>CMCP6</strain>
    </source>
</reference>
<name>SYM_VIBVU</name>
<feature type="chain" id="PRO_0000139172" description="Methionine--tRNA ligase">
    <location>
        <begin position="1"/>
        <end position="690"/>
    </location>
</feature>
<feature type="domain" description="tRNA-binding" evidence="1">
    <location>
        <begin position="589"/>
        <end position="690"/>
    </location>
</feature>
<feature type="short sequence motif" description="'HIGH' region">
    <location>
        <begin position="20"/>
        <end position="30"/>
    </location>
</feature>
<feature type="short sequence motif" description="'KMSKS' region">
    <location>
        <begin position="337"/>
        <end position="341"/>
    </location>
</feature>
<feature type="binding site" evidence="1">
    <location>
        <position position="151"/>
    </location>
    <ligand>
        <name>Zn(2+)</name>
        <dbReference type="ChEBI" id="CHEBI:29105"/>
    </ligand>
</feature>
<feature type="binding site" evidence="1">
    <location>
        <position position="154"/>
    </location>
    <ligand>
        <name>Zn(2+)</name>
        <dbReference type="ChEBI" id="CHEBI:29105"/>
    </ligand>
</feature>
<feature type="binding site" evidence="1">
    <location>
        <position position="164"/>
    </location>
    <ligand>
        <name>Zn(2+)</name>
        <dbReference type="ChEBI" id="CHEBI:29105"/>
    </ligand>
</feature>
<feature type="binding site" evidence="1">
    <location>
        <position position="167"/>
    </location>
    <ligand>
        <name>Zn(2+)</name>
        <dbReference type="ChEBI" id="CHEBI:29105"/>
    </ligand>
</feature>
<feature type="binding site" evidence="1">
    <location>
        <position position="340"/>
    </location>
    <ligand>
        <name>ATP</name>
        <dbReference type="ChEBI" id="CHEBI:30616"/>
    </ligand>
</feature>
<organism>
    <name type="scientific">Vibrio vulnificus (strain CMCP6)</name>
    <dbReference type="NCBI Taxonomy" id="216895"/>
    <lineage>
        <taxon>Bacteria</taxon>
        <taxon>Pseudomonadati</taxon>
        <taxon>Pseudomonadota</taxon>
        <taxon>Gammaproteobacteria</taxon>
        <taxon>Vibrionales</taxon>
        <taxon>Vibrionaceae</taxon>
        <taxon>Vibrio</taxon>
    </lineage>
</organism>
<proteinExistence type="inferred from homology"/>
<gene>
    <name evidence="1" type="primary">metG</name>
    <name type="ordered locus">VV1_3028</name>
</gene>